<evidence type="ECO:0000255" key="1">
    <source>
        <dbReference type="HAMAP-Rule" id="MF_00292"/>
    </source>
</evidence>
<evidence type="ECO:0000305" key="2"/>
<sequence>MSAEESEEGATPAEVIEVVGKTGMHGEAMQVKCRIQEGGNQGRIITRNVLGPVRVGDVIQLKETAREADSIGGQ</sequence>
<name>RS28_HALS3</name>
<feature type="chain" id="PRO_1000115082" description="Small ribosomal subunit protein eS28">
    <location>
        <begin position="1"/>
        <end position="74"/>
    </location>
</feature>
<protein>
    <recommendedName>
        <fullName evidence="1">Small ribosomal subunit protein eS28</fullName>
    </recommendedName>
    <alternativeName>
        <fullName evidence="2">30S ribosomal protein S28e</fullName>
    </alternativeName>
</protein>
<gene>
    <name evidence="1" type="primary">rps28e</name>
    <name type="ordered locus">OE_2664F</name>
</gene>
<reference key="1">
    <citation type="journal article" date="2008" name="Genomics">
        <title>Evolution in the laboratory: the genome of Halobacterium salinarum strain R1 compared to that of strain NRC-1.</title>
        <authorList>
            <person name="Pfeiffer F."/>
            <person name="Schuster S.C."/>
            <person name="Broicher A."/>
            <person name="Falb M."/>
            <person name="Palm P."/>
            <person name="Rodewald K."/>
            <person name="Ruepp A."/>
            <person name="Soppa J."/>
            <person name="Tittor J."/>
            <person name="Oesterhelt D."/>
        </authorList>
    </citation>
    <scope>NUCLEOTIDE SEQUENCE [LARGE SCALE GENOMIC DNA]</scope>
    <source>
        <strain>ATCC 29341 / DSM 671 / R1</strain>
    </source>
</reference>
<dbReference type="EMBL" id="AM774415">
    <property type="protein sequence ID" value="CAP13815.1"/>
    <property type="molecule type" value="Genomic_DNA"/>
</dbReference>
<dbReference type="RefSeq" id="WP_010902833.1">
    <property type="nucleotide sequence ID" value="NC_010364.1"/>
</dbReference>
<dbReference type="SMR" id="B0R500"/>
<dbReference type="EnsemblBacteria" id="CAP13815">
    <property type="protein sequence ID" value="CAP13815"/>
    <property type="gene ID" value="OE_2664F"/>
</dbReference>
<dbReference type="KEGG" id="hsl:OE_2664F"/>
<dbReference type="HOGENOM" id="CLU_178987_2_1_2"/>
<dbReference type="PhylomeDB" id="B0R500"/>
<dbReference type="Proteomes" id="UP000001321">
    <property type="component" value="Chromosome"/>
</dbReference>
<dbReference type="GO" id="GO:0022627">
    <property type="term" value="C:cytosolic small ribosomal subunit"/>
    <property type="evidence" value="ECO:0007669"/>
    <property type="project" value="TreeGrafter"/>
</dbReference>
<dbReference type="GO" id="GO:0003735">
    <property type="term" value="F:structural constituent of ribosome"/>
    <property type="evidence" value="ECO:0007669"/>
    <property type="project" value="InterPro"/>
</dbReference>
<dbReference type="GO" id="GO:0030490">
    <property type="term" value="P:maturation of SSU-rRNA"/>
    <property type="evidence" value="ECO:0007669"/>
    <property type="project" value="TreeGrafter"/>
</dbReference>
<dbReference type="GO" id="GO:0000028">
    <property type="term" value="P:ribosomal small subunit assembly"/>
    <property type="evidence" value="ECO:0007669"/>
    <property type="project" value="TreeGrafter"/>
</dbReference>
<dbReference type="GO" id="GO:0006412">
    <property type="term" value="P:translation"/>
    <property type="evidence" value="ECO:0007669"/>
    <property type="project" value="UniProtKB-UniRule"/>
</dbReference>
<dbReference type="CDD" id="cd04457">
    <property type="entry name" value="S1_S28E"/>
    <property type="match status" value="1"/>
</dbReference>
<dbReference type="FunFam" id="2.40.50.140:FF:000145">
    <property type="entry name" value="30S ribosomal protein S28e"/>
    <property type="match status" value="1"/>
</dbReference>
<dbReference type="Gene3D" id="2.40.50.140">
    <property type="entry name" value="Nucleic acid-binding proteins"/>
    <property type="match status" value="1"/>
</dbReference>
<dbReference type="HAMAP" id="MF_00292">
    <property type="entry name" value="Ribosomal_eS28"/>
    <property type="match status" value="1"/>
</dbReference>
<dbReference type="InterPro" id="IPR012340">
    <property type="entry name" value="NA-bd_OB-fold"/>
</dbReference>
<dbReference type="InterPro" id="IPR000289">
    <property type="entry name" value="Ribosomal_eS28"/>
</dbReference>
<dbReference type="NCBIfam" id="NF003080">
    <property type="entry name" value="PRK04007.1"/>
    <property type="match status" value="1"/>
</dbReference>
<dbReference type="PANTHER" id="PTHR10769">
    <property type="entry name" value="40S RIBOSOMAL PROTEIN S28"/>
    <property type="match status" value="1"/>
</dbReference>
<dbReference type="PANTHER" id="PTHR10769:SF3">
    <property type="entry name" value="SMALL RIBOSOMAL SUBUNIT PROTEIN ES28"/>
    <property type="match status" value="1"/>
</dbReference>
<dbReference type="Pfam" id="PF01200">
    <property type="entry name" value="Ribosomal_S28e"/>
    <property type="match status" value="1"/>
</dbReference>
<dbReference type="SUPFAM" id="SSF50249">
    <property type="entry name" value="Nucleic acid-binding proteins"/>
    <property type="match status" value="1"/>
</dbReference>
<comment type="similarity">
    <text evidence="1">Belongs to the eukaryotic ribosomal protein eS28 family.</text>
</comment>
<organism>
    <name type="scientific">Halobacterium salinarum (strain ATCC 29341 / DSM 671 / R1)</name>
    <dbReference type="NCBI Taxonomy" id="478009"/>
    <lineage>
        <taxon>Archaea</taxon>
        <taxon>Methanobacteriati</taxon>
        <taxon>Methanobacteriota</taxon>
        <taxon>Stenosarchaea group</taxon>
        <taxon>Halobacteria</taxon>
        <taxon>Halobacteriales</taxon>
        <taxon>Halobacteriaceae</taxon>
        <taxon>Halobacterium</taxon>
        <taxon>Halobacterium salinarum NRC-34001</taxon>
    </lineage>
</organism>
<proteinExistence type="inferred from homology"/>
<accession>B0R500</accession>
<keyword id="KW-0687">Ribonucleoprotein</keyword>
<keyword id="KW-0689">Ribosomal protein</keyword>